<sequence>MKKVLYGIFAISALAATSAWAAPVQVGEAAGSAATSVSAGSSSATSVSTVSSAVGVALAATGGGDGSNTGTTTTTTTSTQ</sequence>
<dbReference type="EMBL" id="AE014075">
    <property type="protein sequence ID" value="AAN83420.1"/>
    <property type="molecule type" value="Genomic_DNA"/>
</dbReference>
<dbReference type="RefSeq" id="WP_000757333.1">
    <property type="nucleotide sequence ID" value="NZ_CP051263.1"/>
</dbReference>
<dbReference type="STRING" id="199310.c4994"/>
<dbReference type="GeneID" id="75204169"/>
<dbReference type="KEGG" id="ecc:c4994"/>
<dbReference type="eggNOG" id="ENOG5032T2M">
    <property type="taxonomic scope" value="Bacteria"/>
</dbReference>
<dbReference type="HOGENOM" id="CLU_171058_2_0_6"/>
<dbReference type="BioCyc" id="ECOL199310:C4994-MONOMER"/>
<dbReference type="Proteomes" id="UP000001410">
    <property type="component" value="Chromosome"/>
</dbReference>
<dbReference type="InterPro" id="IPR025858">
    <property type="entry name" value="YjbE"/>
</dbReference>
<dbReference type="Pfam" id="PF11106">
    <property type="entry name" value="YjbE"/>
    <property type="match status" value="1"/>
</dbReference>
<feature type="signal peptide" evidence="1">
    <location>
        <begin position="1"/>
        <end position="21"/>
    </location>
</feature>
<feature type="chain" id="PRO_0000044592" description="Uncharacterized protein YjbE">
    <location>
        <begin position="22"/>
        <end position="80"/>
    </location>
</feature>
<feature type="region of interest" description="Disordered" evidence="2">
    <location>
        <begin position="59"/>
        <end position="80"/>
    </location>
</feature>
<feature type="compositionally biased region" description="Low complexity" evidence="2">
    <location>
        <begin position="68"/>
        <end position="80"/>
    </location>
</feature>
<evidence type="ECO:0000255" key="1"/>
<evidence type="ECO:0000256" key="2">
    <source>
        <dbReference type="SAM" id="MobiDB-lite"/>
    </source>
</evidence>
<accession>P0AF46</accession>
<accession>P32686</accession>
<accession>Q9Z3E1</accession>
<organism>
    <name type="scientific">Escherichia coli O6:H1 (strain CFT073 / ATCC 700928 / UPEC)</name>
    <dbReference type="NCBI Taxonomy" id="199310"/>
    <lineage>
        <taxon>Bacteria</taxon>
        <taxon>Pseudomonadati</taxon>
        <taxon>Pseudomonadota</taxon>
        <taxon>Gammaproteobacteria</taxon>
        <taxon>Enterobacterales</taxon>
        <taxon>Enterobacteriaceae</taxon>
        <taxon>Escherichia</taxon>
    </lineage>
</organism>
<keyword id="KW-1185">Reference proteome</keyword>
<keyword id="KW-0732">Signal</keyword>
<reference key="1">
    <citation type="journal article" date="2002" name="Proc. Natl. Acad. Sci. U.S.A.">
        <title>Extensive mosaic structure revealed by the complete genome sequence of uropathogenic Escherichia coli.</title>
        <authorList>
            <person name="Welch R.A."/>
            <person name="Burland V."/>
            <person name="Plunkett G. III"/>
            <person name="Redford P."/>
            <person name="Roesch P."/>
            <person name="Rasko D."/>
            <person name="Buckles E.L."/>
            <person name="Liou S.-R."/>
            <person name="Boutin A."/>
            <person name="Hackett J."/>
            <person name="Stroud D."/>
            <person name="Mayhew G.F."/>
            <person name="Rose D.J."/>
            <person name="Zhou S."/>
            <person name="Schwartz D.C."/>
            <person name="Perna N.T."/>
            <person name="Mobley H.L.T."/>
            <person name="Donnenberg M.S."/>
            <person name="Blattner F.R."/>
        </authorList>
    </citation>
    <scope>NUCLEOTIDE SEQUENCE [LARGE SCALE GENOMIC DNA]</scope>
    <source>
        <strain>CFT073 / ATCC 700928 / UPEC</strain>
    </source>
</reference>
<gene>
    <name type="primary">yjbE</name>
    <name type="ordered locus">c4994</name>
</gene>
<name>YJBE_ECOL6</name>
<protein>
    <recommendedName>
        <fullName>Uncharacterized protein YjbE</fullName>
    </recommendedName>
</protein>
<proteinExistence type="inferred from homology"/>